<name>DGKZ_RAT</name>
<protein>
    <recommendedName>
        <fullName evidence="9">Diacylglycerol kinase zeta</fullName>
        <shortName>DAG kinase zeta</shortName>
        <ecNumber evidence="1">2.7.1.107</ecNumber>
        <ecNumber evidence="1">2.7.1.93</ecNumber>
    </recommendedName>
    <alternativeName>
        <fullName>104 kDa diacylglycerol kinase</fullName>
    </alternativeName>
    <alternativeName>
        <fullName>DGK-IV</fullName>
    </alternativeName>
    <alternativeName>
        <fullName>Diglyceride kinase zeta</fullName>
        <shortName>DGK-zeta</shortName>
    </alternativeName>
</protein>
<gene>
    <name evidence="11" type="primary">Dgkz</name>
    <name type="synonym">Dagk6</name>
</gene>
<comment type="function">
    <text evidence="1 2">Diacylglycerol kinase that converts diacylglycerol/DAG into phosphatidic acid/phosphatidate/PA and regulates the respective levels of these two bioactive lipids. Thereby, acts as a central switch between the signaling pathways activated by these second messengers with different cellular targets and opposite effects in numerous biological processes. Also plays an important role in the biosynthesis of complex lipids. Does not exhibit an acyl chain-dependent substrate specificity among diacylglycerol species. Can also phosphorylate 1-alkyl-2-acylglycerol in vitro but less efficiently and with a preference for alkylacylglycerols containing an arachidonoyl group (By similarity). The biological processes it is involved in include T cell activation since it negatively regulates T-cell receptor signaling which is in part mediated by diacylglycerol (By similarity). By generating phosphatidic acid, stimulates PIP5KIA activity which regulates actin polymerization (By similarity). Through the same mechanism could also positively regulate insulin-induced translocation of SLC2A4 to the cell membrane (By similarity). Regulates RASGRP1 activity (By similarity).</text>
</comment>
<comment type="catalytic activity">
    <reaction evidence="1">
        <text>a 1,2-diacyl-sn-glycerol + ATP = a 1,2-diacyl-sn-glycero-3-phosphate + ADP + H(+)</text>
        <dbReference type="Rhea" id="RHEA:10272"/>
        <dbReference type="ChEBI" id="CHEBI:15378"/>
        <dbReference type="ChEBI" id="CHEBI:17815"/>
        <dbReference type="ChEBI" id="CHEBI:30616"/>
        <dbReference type="ChEBI" id="CHEBI:58608"/>
        <dbReference type="ChEBI" id="CHEBI:456216"/>
        <dbReference type="EC" id="2.7.1.107"/>
    </reaction>
    <physiologicalReaction direction="left-to-right" evidence="1">
        <dbReference type="Rhea" id="RHEA:10273"/>
    </physiologicalReaction>
</comment>
<comment type="catalytic activity">
    <reaction evidence="1">
        <text>a 1-O-alkyl-sn-glycerol + ATP = a 1-O-alkyl-sn-glycero-3-phosphate + ADP + H(+)</text>
        <dbReference type="Rhea" id="RHEA:16937"/>
        <dbReference type="ChEBI" id="CHEBI:15378"/>
        <dbReference type="ChEBI" id="CHEBI:15850"/>
        <dbReference type="ChEBI" id="CHEBI:30616"/>
        <dbReference type="ChEBI" id="CHEBI:58014"/>
        <dbReference type="ChEBI" id="CHEBI:456216"/>
        <dbReference type="EC" id="2.7.1.93"/>
    </reaction>
    <physiologicalReaction direction="left-to-right" evidence="1">
        <dbReference type="Rhea" id="RHEA:16938"/>
    </physiologicalReaction>
</comment>
<comment type="catalytic activity">
    <reaction evidence="1">
        <text>1-O-alkyl-2-acyl-sn-glycerol + ATP = 1-O-alkyl-2-acyl-sn-glycero-3-phosphate + ADP + H(+)</text>
        <dbReference type="Rhea" id="RHEA:44072"/>
        <dbReference type="ChEBI" id="CHEBI:15378"/>
        <dbReference type="ChEBI" id="CHEBI:30616"/>
        <dbReference type="ChEBI" id="CHEBI:52595"/>
        <dbReference type="ChEBI" id="CHEBI:73332"/>
        <dbReference type="ChEBI" id="CHEBI:456216"/>
    </reaction>
    <physiologicalReaction direction="left-to-right" evidence="1">
        <dbReference type="Rhea" id="RHEA:44073"/>
    </physiologicalReaction>
</comment>
<comment type="catalytic activity">
    <reaction evidence="1">
        <text>1,2-didecanoyl-sn-glycerol + ATP = 1,2-didecanoyl-sn-glycero-3-phosphate + ADP + H(+)</text>
        <dbReference type="Rhea" id="RHEA:43428"/>
        <dbReference type="ChEBI" id="CHEBI:15378"/>
        <dbReference type="ChEBI" id="CHEBI:18155"/>
        <dbReference type="ChEBI" id="CHEBI:30616"/>
        <dbReference type="ChEBI" id="CHEBI:78227"/>
        <dbReference type="ChEBI" id="CHEBI:456216"/>
    </reaction>
    <physiologicalReaction direction="left-to-right" evidence="1">
        <dbReference type="Rhea" id="RHEA:43429"/>
    </physiologicalReaction>
</comment>
<comment type="catalytic activity">
    <reaction evidence="1">
        <text>1,2-ditetradecanoyl-sn-glycerol + ATP = 1,2-ditetradecanoyl-sn-glycero-3-phosphate + ADP + H(+)</text>
        <dbReference type="Rhea" id="RHEA:43444"/>
        <dbReference type="ChEBI" id="CHEBI:15378"/>
        <dbReference type="ChEBI" id="CHEBI:30616"/>
        <dbReference type="ChEBI" id="CHEBI:80651"/>
        <dbReference type="ChEBI" id="CHEBI:83550"/>
        <dbReference type="ChEBI" id="CHEBI:456216"/>
    </reaction>
    <physiologicalReaction direction="left-to-right" evidence="1">
        <dbReference type="Rhea" id="RHEA:43445"/>
    </physiologicalReaction>
</comment>
<comment type="catalytic activity">
    <reaction evidence="1">
        <text>1-hexadecanoyl-2-(9Z-octadecenoyl)-sn-glycerol + ATP = 1-hexadecanoyl-2-(9Z-octadecenoyl)-sn-glycero-3-phosphate + ADP + H(+)</text>
        <dbReference type="Rhea" id="RHEA:43416"/>
        <dbReference type="ChEBI" id="CHEBI:15378"/>
        <dbReference type="ChEBI" id="CHEBI:30616"/>
        <dbReference type="ChEBI" id="CHEBI:64839"/>
        <dbReference type="ChEBI" id="CHEBI:75466"/>
        <dbReference type="ChEBI" id="CHEBI:456216"/>
    </reaction>
    <physiologicalReaction direction="left-to-right" evidence="1">
        <dbReference type="Rhea" id="RHEA:43417"/>
    </physiologicalReaction>
</comment>
<comment type="catalytic activity">
    <reaction evidence="1">
        <text>1-hexadecanoyl-2-(5Z,8Z,11Z,14Z-eicosatetraenoyl)-sn-glycerol + ATP = 1-hexadecanoyl-2-(5Z,8Z,11Z,14Z-eicosatetraenoyl)-sn-glycero-3-phosphate + ADP + H(+)</text>
        <dbReference type="Rhea" id="RHEA:40335"/>
        <dbReference type="ChEBI" id="CHEBI:15378"/>
        <dbReference type="ChEBI" id="CHEBI:30616"/>
        <dbReference type="ChEBI" id="CHEBI:72864"/>
        <dbReference type="ChEBI" id="CHEBI:77096"/>
        <dbReference type="ChEBI" id="CHEBI:456216"/>
    </reaction>
    <physiologicalReaction direction="left-to-right" evidence="1">
        <dbReference type="Rhea" id="RHEA:40336"/>
    </physiologicalReaction>
</comment>
<comment type="catalytic activity">
    <reaction evidence="1">
        <text>1-octadecanoyl-2-(9Z-octadecenoyl)-sn-glycerol + ATP = 1-octadecanoyl-2-(9Z-octadecenoyl)-sn-glycero-3-phosphate + ADP + H(+)</text>
        <dbReference type="Rhea" id="RHEA:43424"/>
        <dbReference type="ChEBI" id="CHEBI:15378"/>
        <dbReference type="ChEBI" id="CHEBI:30616"/>
        <dbReference type="ChEBI" id="CHEBI:74560"/>
        <dbReference type="ChEBI" id="CHEBI:75468"/>
        <dbReference type="ChEBI" id="CHEBI:456216"/>
    </reaction>
    <physiologicalReaction direction="left-to-right" evidence="1">
        <dbReference type="Rhea" id="RHEA:43425"/>
    </physiologicalReaction>
</comment>
<comment type="catalytic activity">
    <reaction evidence="1">
        <text>1-octadecanoyl-2-(5Z,8Z,11Z,14Z-eicosatetraenoyl)-sn-glycerol + ATP = 1-octadecanoyl-2-(5Z,8Z,11Z,14Z-eicosatetraenoyl)-sn-glycero-3-phosphate + ADP + H(+)</text>
        <dbReference type="Rhea" id="RHEA:40323"/>
        <dbReference type="ChEBI" id="CHEBI:15378"/>
        <dbReference type="ChEBI" id="CHEBI:30616"/>
        <dbReference type="ChEBI" id="CHEBI:75728"/>
        <dbReference type="ChEBI" id="CHEBI:77091"/>
        <dbReference type="ChEBI" id="CHEBI:456216"/>
    </reaction>
    <physiologicalReaction direction="left-to-right" evidence="1">
        <dbReference type="Rhea" id="RHEA:40324"/>
    </physiologicalReaction>
</comment>
<comment type="catalytic activity">
    <reaction evidence="1">
        <text>1-octadecanoyl-2-(4Z,7Z,10Z,13Z,16Z,19Z-docosahexaenoyl)-sn-glycerol + ATP = 1-octadecanoyl-2-(4Z,7Z,10Z,13Z,16Z,19Z-docosahexaenoyl)-sn-glycero-3-phosphate + ADP + H(+)</text>
        <dbReference type="Rhea" id="RHEA:40359"/>
        <dbReference type="ChEBI" id="CHEBI:15378"/>
        <dbReference type="ChEBI" id="CHEBI:30616"/>
        <dbReference type="ChEBI" id="CHEBI:77129"/>
        <dbReference type="ChEBI" id="CHEBI:77130"/>
        <dbReference type="ChEBI" id="CHEBI:456216"/>
    </reaction>
    <physiologicalReaction direction="left-to-right" evidence="1">
        <dbReference type="Rhea" id="RHEA:40360"/>
    </physiologicalReaction>
</comment>
<comment type="catalytic activity">
    <reaction evidence="1">
        <text>1,2-di-(9Z-octadecenoyl)-sn-glycerol + ATP = 1,2-di-(9Z-octadecenoyl)-sn-glycero-3-phosphate + ADP + H(+)</text>
        <dbReference type="Rhea" id="RHEA:40327"/>
        <dbReference type="ChEBI" id="CHEBI:15378"/>
        <dbReference type="ChEBI" id="CHEBI:30616"/>
        <dbReference type="ChEBI" id="CHEBI:52333"/>
        <dbReference type="ChEBI" id="CHEBI:74546"/>
        <dbReference type="ChEBI" id="CHEBI:456216"/>
    </reaction>
    <physiologicalReaction direction="left-to-right" evidence="1">
        <dbReference type="Rhea" id="RHEA:40328"/>
    </physiologicalReaction>
</comment>
<comment type="catalytic activity">
    <reaction evidence="1">
        <text>1-(9Z-octadecenoyl)-2-hexadecanoyl-sn-glycerol + ATP = 1-(9Z)-octadecenoyl-2-hexadecanoyl-sn-glycero-3-phosphate + ADP + H(+)</text>
        <dbReference type="Rhea" id="RHEA:43420"/>
        <dbReference type="ChEBI" id="CHEBI:15378"/>
        <dbReference type="ChEBI" id="CHEBI:30616"/>
        <dbReference type="ChEBI" id="CHEBI:74551"/>
        <dbReference type="ChEBI" id="CHEBI:75447"/>
        <dbReference type="ChEBI" id="CHEBI:456216"/>
    </reaction>
    <physiologicalReaction direction="left-to-right" evidence="1">
        <dbReference type="Rhea" id="RHEA:43421"/>
    </physiologicalReaction>
</comment>
<comment type="catalytic activity">
    <reaction evidence="1">
        <text>1-eicosanoyl-2-(5Z,8Z,11Z,14Z)-eicosatetraenoyl-sn-glycerol + ATP = 1-eicosanoyl-2-(5Z,8Z,11Z,14Z)-eicosatetraenoyl-sn-glycero-3-phosphate + ADP + H(+)</text>
        <dbReference type="Rhea" id="RHEA:40331"/>
        <dbReference type="ChEBI" id="CHEBI:15378"/>
        <dbReference type="ChEBI" id="CHEBI:30616"/>
        <dbReference type="ChEBI" id="CHEBI:77094"/>
        <dbReference type="ChEBI" id="CHEBI:87223"/>
        <dbReference type="ChEBI" id="CHEBI:456216"/>
    </reaction>
    <physiologicalReaction direction="left-to-right" evidence="1">
        <dbReference type="Rhea" id="RHEA:40332"/>
    </physiologicalReaction>
</comment>
<comment type="catalytic activity">
    <reaction evidence="1">
        <text>1,2-di-(5Z,8Z,11Z,14Z)-eicosatetraenoyl-sn-glycerol + ATP = 1,2-di-(5Z,8Z,11Z,14Z)-eicosatetraenoyl-sn-glycero-3-phosphate + ADP + H(+)</text>
        <dbReference type="Rhea" id="RHEA:40351"/>
        <dbReference type="ChEBI" id="CHEBI:15378"/>
        <dbReference type="ChEBI" id="CHEBI:30616"/>
        <dbReference type="ChEBI" id="CHEBI:77125"/>
        <dbReference type="ChEBI" id="CHEBI:77126"/>
        <dbReference type="ChEBI" id="CHEBI:456216"/>
    </reaction>
    <physiologicalReaction direction="left-to-right" evidence="1">
        <dbReference type="Rhea" id="RHEA:40352"/>
    </physiologicalReaction>
</comment>
<comment type="catalytic activity">
    <reaction evidence="1">
        <text>1-O-hexadecyl-2-acetyl-sn-glycerol + ATP = 1-O-hexadecyl-2-acetyl-sn-glycero-3-phosphate + ADP + H(+)</text>
        <dbReference type="Rhea" id="RHEA:41676"/>
        <dbReference type="ChEBI" id="CHEBI:15378"/>
        <dbReference type="ChEBI" id="CHEBI:30616"/>
        <dbReference type="ChEBI" id="CHEBI:75936"/>
        <dbReference type="ChEBI" id="CHEBI:78385"/>
        <dbReference type="ChEBI" id="CHEBI:456216"/>
    </reaction>
    <physiologicalReaction direction="left-to-right" evidence="1">
        <dbReference type="Rhea" id="RHEA:41677"/>
    </physiologicalReaction>
</comment>
<comment type="catalytic activity">
    <reaction evidence="1">
        <text>1-O-hexadecyl-2-(5Z,8Z,11Z,14Z-eicosatetraenoyl)-sn-glycerol + ATP = 1-O-hexadecyl-2-(5Z,8Z,11Z,14Z-eicosatetraenoyl)-sn-glycero-3-phosphate + ADP + H(+)</text>
        <dbReference type="Rhea" id="RHEA:40403"/>
        <dbReference type="ChEBI" id="CHEBI:15378"/>
        <dbReference type="ChEBI" id="CHEBI:30616"/>
        <dbReference type="ChEBI" id="CHEBI:77184"/>
        <dbReference type="ChEBI" id="CHEBI:77186"/>
        <dbReference type="ChEBI" id="CHEBI:456216"/>
    </reaction>
    <physiologicalReaction direction="left-to-right" evidence="1">
        <dbReference type="Rhea" id="RHEA:40404"/>
    </physiologicalReaction>
</comment>
<comment type="catalytic activity">
    <reaction evidence="1">
        <text>1-O-hexadecyl-2-(9Z-octadecenoyl)-sn-glycerol + ATP = 1-O-hexadecyl-2-(9Z-octadecenoyl)-sn-glycero-3-phosphate + ADP + H(+)</text>
        <dbReference type="Rhea" id="RHEA:40407"/>
        <dbReference type="ChEBI" id="CHEBI:15378"/>
        <dbReference type="ChEBI" id="CHEBI:30616"/>
        <dbReference type="ChEBI" id="CHEBI:77185"/>
        <dbReference type="ChEBI" id="CHEBI:77187"/>
        <dbReference type="ChEBI" id="CHEBI:456216"/>
    </reaction>
    <physiologicalReaction direction="left-to-right" evidence="1">
        <dbReference type="Rhea" id="RHEA:40408"/>
    </physiologicalReaction>
</comment>
<comment type="catalytic activity">
    <reaction evidence="1">
        <text>1-O-hexadecyl-sn-glycerol + ATP = 1-O-hexadecyl-sn-glycero-3-phosphate + ADP + H(+)</text>
        <dbReference type="Rhea" id="RHEA:41672"/>
        <dbReference type="ChEBI" id="CHEBI:15378"/>
        <dbReference type="ChEBI" id="CHEBI:30616"/>
        <dbReference type="ChEBI" id="CHEBI:34115"/>
        <dbReference type="ChEBI" id="CHEBI:77580"/>
        <dbReference type="ChEBI" id="CHEBI:456216"/>
    </reaction>
    <physiologicalReaction direction="left-to-right" evidence="1">
        <dbReference type="Rhea" id="RHEA:41673"/>
    </physiologicalReaction>
</comment>
<comment type="pathway">
    <text evidence="1">Lipid metabolism; glycerolipid metabolism.</text>
</comment>
<comment type="subunit">
    <text evidence="1 2 7">Interacts (via PDZ-binding motif) with the PDZ domain of the syntrophin SNTG1 and that of SNX27 (By similarity). Interacts with IRS1 in the absence of insulin; insulin stimulation decreases this interaction (By similarity). Found in a ternary complex with IRS1 and PIP5K1A in the absence of insulin (By similarity). Interacts with PIP5K1A (PubMed:15157668). Forms a signaling complex with RASGRP1 and HRAS (By similarity).</text>
</comment>
<comment type="interaction">
    <interactant intactId="EBI-8570505">
        <id>O08560</id>
    </interactant>
    <interactant intactId="EBI-389325">
        <id>Q62696</id>
        <label>Dlg1</label>
    </interactant>
    <organismsDiffer>false</organismsDiffer>
    <experiments>4</experiments>
</comment>
<comment type="interaction">
    <interactant intactId="EBI-8570505">
        <id>O08560</id>
    </interactant>
    <interactant intactId="EBI-396947">
        <id>Q63622</id>
        <label>Dlg2</label>
    </interactant>
    <organismsDiffer>false</organismsDiffer>
    <experiments>4</experiments>
</comment>
<comment type="interaction">
    <interactant intactId="EBI-8570505">
        <id>O08560</id>
    </interactant>
    <interactant intactId="EBI-349596">
        <id>Q62936</id>
        <label>Dlg3</label>
    </interactant>
    <organismsDiffer>false</organismsDiffer>
    <experiments>4</experiments>
</comment>
<comment type="interaction">
    <interactant intactId="EBI-8570505">
        <id>O08560</id>
    </interactant>
    <interactant intactId="EBI-375655">
        <id>P31016</id>
        <label>Dlg4</label>
    </interactant>
    <organismsDiffer>false</organismsDiffer>
    <experiments>6</experiments>
</comment>
<comment type="subcellular location">
    <subcellularLocation>
        <location evidence="8">Nucleus</location>
    </subcellularLocation>
    <subcellularLocation>
        <location evidence="1">Cytoplasm</location>
        <location evidence="1">Cytosol</location>
    </subcellularLocation>
    <subcellularLocation>
        <location evidence="1">Cell membrane</location>
    </subcellularLocation>
    <subcellularLocation>
        <location evidence="1">Cell projection</location>
        <location evidence="1">Lamellipodium</location>
    </subcellularLocation>
</comment>
<comment type="domain">
    <text evidence="1">The PDZ-binding motif mediates interaction with PDZ domain-containing proteins like SNTG1 and SNX27.</text>
</comment>
<comment type="similarity">
    <text evidence="10">Belongs to the eukaryotic diacylglycerol kinase family.</text>
</comment>
<keyword id="KW-0040">ANK repeat</keyword>
<keyword id="KW-0067">ATP-binding</keyword>
<keyword id="KW-1003">Cell membrane</keyword>
<keyword id="KW-0966">Cell projection</keyword>
<keyword id="KW-0963">Cytoplasm</keyword>
<keyword id="KW-0418">Kinase</keyword>
<keyword id="KW-0443">Lipid metabolism</keyword>
<keyword id="KW-0472">Membrane</keyword>
<keyword id="KW-0479">Metal-binding</keyword>
<keyword id="KW-0547">Nucleotide-binding</keyword>
<keyword id="KW-0539">Nucleus</keyword>
<keyword id="KW-0597">Phosphoprotein</keyword>
<keyword id="KW-1185">Reference proteome</keyword>
<keyword id="KW-0677">Repeat</keyword>
<keyword id="KW-0808">Transferase</keyword>
<keyword id="KW-0862">Zinc</keyword>
<keyword id="KW-0863">Zinc-finger</keyword>
<sequence length="929" mass="104009">MEPRDPSPEARSSDSESASASSSGSERDADPEPDKAPRRLTKRRFPGLRLFGHRKAITKSGLQHLAPPPPTPGAPCGESERQIRSTVDWSESAAYGEHIWFETNVSGDFCYVGEQYCVAKMLPKSAPRRKCAACKIVVHTPCIGQLEKINFRCKPSFRESGSRNVREPTFVRHHWVHRRRQDGKCRHCGKGFQQKFTFHSKEIVAISCSWCKQAYHSKVSCFMLQQIEEPCSLGVHAAVVIPPTWILRARRPQNTLKASKKKKRASFKRRSSKKGPEEGRWRPFIIRPTPSPLMKPLLVFVNPKSGGNQGAKIIQSFLWYLNPRQVFDLSQGGPREALEMYRKVHNLRILACGGDGTVGWILSTLDQLRLKPPPPVAILPLGTGNDLARTLNWGGGYTDEPVSKILSHVEEGNVVQLDRWDLRAEPNPEAGPEERDDGATDRLPLDVFNNYFSLGFDAHVTLEFHESREANPEKFNSRFRNKMFYAGTAFSDFLMGSSKDLAKHIRVVCDGMDLTPKIQDLKPQCIVFLNIPRYCAGTMPWGHPGEHHDFEPQRHDDGYLEVIGFTMTSLAALQVGGHGERLTQCREVLLTTAKAIPVQVDGEPCKLAASRIRIALRNQATMVQKAKRRSTAPLHSDQQPVPEQLRIQVSRVSMHDYEALHYDKEQLKEASVPLGTVVVPGDSDLELCRAHIERLQQEPDGAGAKSPMCHPLSSKWCFLDATTASRFYRIDRAQEHLNYVTEIAQDEIYILDPELLGASARPDLPTPTSPLPASPCSPTPGSLQGDAALPQGEELIEAAKRNDFCKLQELHRAGGDLMHRDHQSRTLLHHAVSTGSKEVVRYLLDHAPPEILDAVEENGETCLHQAAALGQRTICHYIVEAGASLMKTDQQGDTPRQRAEKAQDTELAAYLENRQHYQMIQREDQETAV</sequence>
<accession>O08560</accession>
<dbReference type="EC" id="2.7.1.107" evidence="1"/>
<dbReference type="EC" id="2.7.1.93" evidence="1"/>
<dbReference type="EMBL" id="D78588">
    <property type="protein sequence ID" value="BAA18942.1"/>
    <property type="molecule type" value="mRNA"/>
</dbReference>
<dbReference type="PIR" id="JC6124">
    <property type="entry name" value="JC6124"/>
</dbReference>
<dbReference type="RefSeq" id="NP_112405.1">
    <property type="nucleotide sequence ID" value="NM_031143.3"/>
</dbReference>
<dbReference type="SMR" id="O08560"/>
<dbReference type="BioGRID" id="249679">
    <property type="interactions" value="4"/>
</dbReference>
<dbReference type="FunCoup" id="O08560">
    <property type="interactions" value="1856"/>
</dbReference>
<dbReference type="IntAct" id="O08560">
    <property type="interactions" value="6"/>
</dbReference>
<dbReference type="MINT" id="O08560"/>
<dbReference type="STRING" id="10116.ENSRNOP00000024280"/>
<dbReference type="GlyGen" id="O08560">
    <property type="glycosylation" value="3 sites"/>
</dbReference>
<dbReference type="iPTMnet" id="O08560"/>
<dbReference type="PhosphoSitePlus" id="O08560"/>
<dbReference type="PaxDb" id="10116-ENSRNOP00000024280"/>
<dbReference type="Ensembl" id="ENSRNOT00000024280.5">
    <property type="protein sequence ID" value="ENSRNOP00000024280.2"/>
    <property type="gene ID" value="ENSRNOG00000017737.7"/>
</dbReference>
<dbReference type="GeneID" id="81821"/>
<dbReference type="KEGG" id="rno:81821"/>
<dbReference type="UCSC" id="RGD:70929">
    <property type="organism name" value="rat"/>
</dbReference>
<dbReference type="AGR" id="RGD:70929"/>
<dbReference type="CTD" id="8525"/>
<dbReference type="RGD" id="70929">
    <property type="gene designation" value="Dgkz"/>
</dbReference>
<dbReference type="eggNOG" id="KOG0782">
    <property type="taxonomic scope" value="Eukaryota"/>
</dbReference>
<dbReference type="GeneTree" id="ENSGT00940000156152"/>
<dbReference type="InParanoid" id="O08560"/>
<dbReference type="OrthoDB" id="242257at2759"/>
<dbReference type="BRENDA" id="2.7.1.107">
    <property type="organism ID" value="5301"/>
</dbReference>
<dbReference type="Reactome" id="R-RNO-114508">
    <property type="pathway name" value="Effects of PIP2 hydrolysis"/>
</dbReference>
<dbReference type="UniPathway" id="UPA00230"/>
<dbReference type="PRO" id="PR:O08560"/>
<dbReference type="Proteomes" id="UP000002494">
    <property type="component" value="Chromosome 3"/>
</dbReference>
<dbReference type="Bgee" id="ENSRNOG00000017737">
    <property type="expression patterns" value="Expressed in thymus and 19 other cell types or tissues"/>
</dbReference>
<dbReference type="ExpressionAtlas" id="O08560">
    <property type="expression patterns" value="baseline and differential"/>
</dbReference>
<dbReference type="GO" id="GO:0005829">
    <property type="term" value="C:cytosol"/>
    <property type="evidence" value="ECO:0000250"/>
    <property type="project" value="UniProtKB"/>
</dbReference>
<dbReference type="GO" id="GO:0098978">
    <property type="term" value="C:glutamatergic synapse"/>
    <property type="evidence" value="ECO:0000314"/>
    <property type="project" value="SynGO"/>
</dbReference>
<dbReference type="GO" id="GO:0030027">
    <property type="term" value="C:lamellipodium"/>
    <property type="evidence" value="ECO:0000266"/>
    <property type="project" value="RGD"/>
</dbReference>
<dbReference type="GO" id="GO:0005634">
    <property type="term" value="C:nucleus"/>
    <property type="evidence" value="ECO:0000266"/>
    <property type="project" value="RGD"/>
</dbReference>
<dbReference type="GO" id="GO:0005886">
    <property type="term" value="C:plasma membrane"/>
    <property type="evidence" value="ECO:0000318"/>
    <property type="project" value="GO_Central"/>
</dbReference>
<dbReference type="GO" id="GO:0014069">
    <property type="term" value="C:postsynaptic density"/>
    <property type="evidence" value="ECO:0000314"/>
    <property type="project" value="SynGO"/>
</dbReference>
<dbReference type="GO" id="GO:0098685">
    <property type="term" value="C:Schaffer collateral - CA1 synapse"/>
    <property type="evidence" value="ECO:0000266"/>
    <property type="project" value="RGD"/>
</dbReference>
<dbReference type="GO" id="GO:0047649">
    <property type="term" value="F:alkylglycerol kinase activity"/>
    <property type="evidence" value="ECO:0007669"/>
    <property type="project" value="RHEA"/>
</dbReference>
<dbReference type="GO" id="GO:0005524">
    <property type="term" value="F:ATP binding"/>
    <property type="evidence" value="ECO:0007669"/>
    <property type="project" value="UniProtKB-KW"/>
</dbReference>
<dbReference type="GO" id="GO:0004143">
    <property type="term" value="F:ATP-dependent diacylglycerol kinase activity"/>
    <property type="evidence" value="ECO:0000314"/>
    <property type="project" value="RGD"/>
</dbReference>
<dbReference type="GO" id="GO:0004857">
    <property type="term" value="F:enzyme inhibitor activity"/>
    <property type="evidence" value="ECO:0000266"/>
    <property type="project" value="RGD"/>
</dbReference>
<dbReference type="GO" id="GO:0016301">
    <property type="term" value="F:kinase activity"/>
    <property type="evidence" value="ECO:0000266"/>
    <property type="project" value="RGD"/>
</dbReference>
<dbReference type="GO" id="GO:0008270">
    <property type="term" value="F:zinc ion binding"/>
    <property type="evidence" value="ECO:0007669"/>
    <property type="project" value="UniProtKB-KW"/>
</dbReference>
<dbReference type="GO" id="GO:0046339">
    <property type="term" value="P:diacylglycerol metabolic process"/>
    <property type="evidence" value="ECO:0000250"/>
    <property type="project" value="UniProtKB"/>
</dbReference>
<dbReference type="GO" id="GO:0046486">
    <property type="term" value="P:glycerolipid metabolic process"/>
    <property type="evidence" value="ECO:0000266"/>
    <property type="project" value="RGD"/>
</dbReference>
<dbReference type="GO" id="GO:0035556">
    <property type="term" value="P:intracellular signal transduction"/>
    <property type="evidence" value="ECO:0000318"/>
    <property type="project" value="GO_Central"/>
</dbReference>
<dbReference type="GO" id="GO:0046834">
    <property type="term" value="P:lipid phosphorylation"/>
    <property type="evidence" value="ECO:0000250"/>
    <property type="project" value="UniProtKB"/>
</dbReference>
<dbReference type="GO" id="GO:0099562">
    <property type="term" value="P:maintenance of postsynaptic density structure"/>
    <property type="evidence" value="ECO:0000266"/>
    <property type="project" value="RGD"/>
</dbReference>
<dbReference type="GO" id="GO:0046580">
    <property type="term" value="P:negative regulation of Ras protein signal transduction"/>
    <property type="evidence" value="ECO:0000266"/>
    <property type="project" value="RGD"/>
</dbReference>
<dbReference type="GO" id="GO:0050860">
    <property type="term" value="P:negative regulation of T cell receptor signaling pathway"/>
    <property type="evidence" value="ECO:0000250"/>
    <property type="project" value="UniProtKB"/>
</dbReference>
<dbReference type="GO" id="GO:0006654">
    <property type="term" value="P:phosphatidic acid biosynthetic process"/>
    <property type="evidence" value="ECO:0000250"/>
    <property type="project" value="UniProtKB"/>
</dbReference>
<dbReference type="GO" id="GO:0007200">
    <property type="term" value="P:phospholipase C-activating G protein-coupled receptor signaling pathway"/>
    <property type="evidence" value="ECO:0007669"/>
    <property type="project" value="InterPro"/>
</dbReference>
<dbReference type="GO" id="GO:0007265">
    <property type="term" value="P:Ras protein signal transduction"/>
    <property type="evidence" value="ECO:0000266"/>
    <property type="project" value="RGD"/>
</dbReference>
<dbReference type="CDD" id="cd20849">
    <property type="entry name" value="C1_DGKzeta_rpt1"/>
    <property type="match status" value="1"/>
</dbReference>
<dbReference type="CDD" id="cd20895">
    <property type="entry name" value="C1_DGKzeta_rpt2"/>
    <property type="match status" value="1"/>
</dbReference>
<dbReference type="FunFam" id="1.25.40.20:FF:000034">
    <property type="entry name" value="Diacylglycerol kinase"/>
    <property type="match status" value="1"/>
</dbReference>
<dbReference type="FunFam" id="2.60.200.40:FF:000002">
    <property type="entry name" value="Diacylglycerol kinase"/>
    <property type="match status" value="1"/>
</dbReference>
<dbReference type="FunFam" id="3.40.50.10330:FF:000002">
    <property type="entry name" value="Diacylglycerol kinase"/>
    <property type="match status" value="1"/>
</dbReference>
<dbReference type="Gene3D" id="2.60.200.40">
    <property type="match status" value="1"/>
</dbReference>
<dbReference type="Gene3D" id="1.25.40.20">
    <property type="entry name" value="Ankyrin repeat-containing domain"/>
    <property type="match status" value="1"/>
</dbReference>
<dbReference type="Gene3D" id="3.40.50.10330">
    <property type="entry name" value="Probable inorganic polyphosphate/atp-NAD kinase, domain 1"/>
    <property type="match status" value="1"/>
</dbReference>
<dbReference type="InterPro" id="IPR002110">
    <property type="entry name" value="Ankyrin_rpt"/>
</dbReference>
<dbReference type="InterPro" id="IPR036770">
    <property type="entry name" value="Ankyrin_rpt-contain_sf"/>
</dbReference>
<dbReference type="InterPro" id="IPR017438">
    <property type="entry name" value="ATP-NAD_kinase_N"/>
</dbReference>
<dbReference type="InterPro" id="IPR047485">
    <property type="entry name" value="C1_DGKzeta_rpt1"/>
</dbReference>
<dbReference type="InterPro" id="IPR047484">
    <property type="entry name" value="C1_DGKzeta_rpt2"/>
</dbReference>
<dbReference type="InterPro" id="IPR037607">
    <property type="entry name" value="DGK"/>
</dbReference>
<dbReference type="InterPro" id="IPR056383">
    <property type="entry name" value="DGKI-like_dom"/>
</dbReference>
<dbReference type="InterPro" id="IPR000756">
    <property type="entry name" value="Diacylglycerol_kin_accessory"/>
</dbReference>
<dbReference type="InterPro" id="IPR001206">
    <property type="entry name" value="Diacylglycerol_kinase_cat_dom"/>
</dbReference>
<dbReference type="InterPro" id="IPR016064">
    <property type="entry name" value="NAD/diacylglycerol_kinase_sf"/>
</dbReference>
<dbReference type="InterPro" id="IPR002219">
    <property type="entry name" value="PE/DAG-bd"/>
</dbReference>
<dbReference type="PANTHER" id="PTHR11255">
    <property type="entry name" value="DIACYLGLYCEROL KINASE"/>
    <property type="match status" value="1"/>
</dbReference>
<dbReference type="PANTHER" id="PTHR11255:SF43">
    <property type="entry name" value="DIACYLGLYCEROL KINASE ZETA"/>
    <property type="match status" value="1"/>
</dbReference>
<dbReference type="Pfam" id="PF12796">
    <property type="entry name" value="Ank_2"/>
    <property type="match status" value="1"/>
</dbReference>
<dbReference type="Pfam" id="PF00130">
    <property type="entry name" value="C1_1"/>
    <property type="match status" value="1"/>
</dbReference>
<dbReference type="Pfam" id="PF00609">
    <property type="entry name" value="DAGK_acc"/>
    <property type="match status" value="1"/>
</dbReference>
<dbReference type="Pfam" id="PF00781">
    <property type="entry name" value="DAGK_cat"/>
    <property type="match status" value="1"/>
</dbReference>
<dbReference type="Pfam" id="PF23578">
    <property type="entry name" value="DGKI"/>
    <property type="match status" value="1"/>
</dbReference>
<dbReference type="SMART" id="SM00248">
    <property type="entry name" value="ANK"/>
    <property type="match status" value="2"/>
</dbReference>
<dbReference type="SMART" id="SM00109">
    <property type="entry name" value="C1"/>
    <property type="match status" value="2"/>
</dbReference>
<dbReference type="SMART" id="SM00045">
    <property type="entry name" value="DAGKa"/>
    <property type="match status" value="1"/>
</dbReference>
<dbReference type="SMART" id="SM00046">
    <property type="entry name" value="DAGKc"/>
    <property type="match status" value="1"/>
</dbReference>
<dbReference type="SUPFAM" id="SSF48403">
    <property type="entry name" value="Ankyrin repeat"/>
    <property type="match status" value="1"/>
</dbReference>
<dbReference type="SUPFAM" id="SSF111331">
    <property type="entry name" value="NAD kinase/diacylglycerol kinase-like"/>
    <property type="match status" value="1"/>
</dbReference>
<dbReference type="PROSITE" id="PS50297">
    <property type="entry name" value="ANK_REP_REGION"/>
    <property type="match status" value="1"/>
</dbReference>
<dbReference type="PROSITE" id="PS50088">
    <property type="entry name" value="ANK_REPEAT"/>
    <property type="match status" value="2"/>
</dbReference>
<dbReference type="PROSITE" id="PS50146">
    <property type="entry name" value="DAGK"/>
    <property type="match status" value="1"/>
</dbReference>
<reference key="1">
    <citation type="journal article" date="1996" name="Proc. Natl. Acad. Sci. U.S.A.">
        <title>A 104-kDa diacylglycerol kinase containing ankyrin-like repeats localizes in the cell nucleus.</title>
        <authorList>
            <person name="Goto K."/>
            <person name="Kondo H."/>
        </authorList>
    </citation>
    <scope>NUCLEOTIDE SEQUENCE [MRNA]</scope>
    <scope>SUBCELLULAR LOCATION</scope>
    <source>
        <strain>Wistar</strain>
    </source>
</reference>
<reference key="2">
    <citation type="journal article" date="2004" name="Cell. Signal.">
        <title>Diacylglycerol kinase zeta regulates phosphatidylinositol 4-phosphate 5-kinase Ialpha by a novel mechanism.</title>
        <authorList>
            <person name="Luo B."/>
            <person name="Prescott S.M."/>
            <person name="Topham M.K."/>
        </authorList>
    </citation>
    <scope>INTERACTION WITH PIP5K1A</scope>
</reference>
<evidence type="ECO:0000250" key="1">
    <source>
        <dbReference type="UniProtKB" id="Q13574"/>
    </source>
</evidence>
<evidence type="ECO:0000250" key="2">
    <source>
        <dbReference type="UniProtKB" id="Q80UP3"/>
    </source>
</evidence>
<evidence type="ECO:0000255" key="3"/>
<evidence type="ECO:0000255" key="4">
    <source>
        <dbReference type="PROSITE-ProRule" id="PRU00226"/>
    </source>
</evidence>
<evidence type="ECO:0000255" key="5">
    <source>
        <dbReference type="PROSITE-ProRule" id="PRU00783"/>
    </source>
</evidence>
<evidence type="ECO:0000256" key="6">
    <source>
        <dbReference type="SAM" id="MobiDB-lite"/>
    </source>
</evidence>
<evidence type="ECO:0000269" key="7">
    <source>
    </source>
</evidence>
<evidence type="ECO:0000269" key="8">
    <source>
    </source>
</evidence>
<evidence type="ECO:0000303" key="9">
    <source>
    </source>
</evidence>
<evidence type="ECO:0000305" key="10"/>
<evidence type="ECO:0000312" key="11">
    <source>
        <dbReference type="RGD" id="70929"/>
    </source>
</evidence>
<proteinExistence type="evidence at protein level"/>
<organism>
    <name type="scientific">Rattus norvegicus</name>
    <name type="common">Rat</name>
    <dbReference type="NCBI Taxonomy" id="10116"/>
    <lineage>
        <taxon>Eukaryota</taxon>
        <taxon>Metazoa</taxon>
        <taxon>Chordata</taxon>
        <taxon>Craniata</taxon>
        <taxon>Vertebrata</taxon>
        <taxon>Euteleostomi</taxon>
        <taxon>Mammalia</taxon>
        <taxon>Eutheria</taxon>
        <taxon>Euarchontoglires</taxon>
        <taxon>Glires</taxon>
        <taxon>Rodentia</taxon>
        <taxon>Myomorpha</taxon>
        <taxon>Muroidea</taxon>
        <taxon>Muridae</taxon>
        <taxon>Murinae</taxon>
        <taxon>Rattus</taxon>
    </lineage>
</organism>
<feature type="chain" id="PRO_0000218470" description="Diacylglycerol kinase zeta">
    <location>
        <begin position="1"/>
        <end position="929"/>
    </location>
</feature>
<feature type="domain" description="DAGKc" evidence="5">
    <location>
        <begin position="292"/>
        <end position="426"/>
    </location>
</feature>
<feature type="repeat" description="ANK 1" evidence="3">
    <location>
        <begin position="823"/>
        <end position="853"/>
    </location>
</feature>
<feature type="repeat" description="ANK 2" evidence="3">
    <location>
        <begin position="858"/>
        <end position="887"/>
    </location>
</feature>
<feature type="zinc finger region" description="Phorbol-ester/DAG-type 1" evidence="4">
    <location>
        <begin position="98"/>
        <end position="153"/>
    </location>
</feature>
<feature type="zinc finger region" description="Phorbol-ester/DAG-type 2" evidence="4">
    <location>
        <begin position="173"/>
        <end position="231"/>
    </location>
</feature>
<feature type="region of interest" description="Disordered" evidence="6">
    <location>
        <begin position="1"/>
        <end position="46"/>
    </location>
</feature>
<feature type="region of interest" description="Disordered" evidence="6">
    <location>
        <begin position="59"/>
        <end position="80"/>
    </location>
</feature>
<feature type="region of interest" description="Disordered" evidence="6">
    <location>
        <begin position="257"/>
        <end position="281"/>
    </location>
</feature>
<feature type="region of interest" description="Mediates interaction with RASGRP1" evidence="1">
    <location>
        <begin position="279"/>
        <end position="417"/>
    </location>
</feature>
<feature type="region of interest" description="Disordered" evidence="6">
    <location>
        <begin position="421"/>
        <end position="441"/>
    </location>
</feature>
<feature type="region of interest" description="Disordered" evidence="6">
    <location>
        <begin position="760"/>
        <end position="783"/>
    </location>
</feature>
<feature type="short sequence motif" description="Nuclear export signal" evidence="2">
    <location>
        <begin position="362"/>
        <end position="370"/>
    </location>
</feature>
<feature type="short sequence motif" description="PDZ-binding" evidence="1">
    <location>
        <begin position="925"/>
        <end position="929"/>
    </location>
</feature>
<feature type="compositionally biased region" description="Basic and acidic residues" evidence="6">
    <location>
        <begin position="1"/>
        <end position="14"/>
    </location>
</feature>
<feature type="compositionally biased region" description="Low complexity" evidence="6">
    <location>
        <begin position="15"/>
        <end position="24"/>
    </location>
</feature>
<feature type="compositionally biased region" description="Basic and acidic residues" evidence="6">
    <location>
        <begin position="25"/>
        <end position="37"/>
    </location>
</feature>
<feature type="compositionally biased region" description="Basic residues" evidence="6">
    <location>
        <begin position="258"/>
        <end position="273"/>
    </location>
</feature>
<feature type="compositionally biased region" description="Pro residues" evidence="6">
    <location>
        <begin position="764"/>
        <end position="778"/>
    </location>
</feature>
<feature type="modified residue" description="Phosphoserine" evidence="1">
    <location>
        <position position="706"/>
    </location>
</feature>
<feature type="modified residue" description="Phosphoserine" evidence="1">
    <location>
        <position position="782"/>
    </location>
</feature>